<accession>Q5UPS6</accession>
<proteinExistence type="predicted"/>
<evidence type="ECO:0000255" key="1"/>
<evidence type="ECO:0000256" key="2">
    <source>
        <dbReference type="SAM" id="MobiDB-lite"/>
    </source>
</evidence>
<evidence type="ECO:0000305" key="3"/>
<comment type="function">
    <text evidence="3">May participate in the formation of a layer of cross-linked glycosylated fibrils at the viral surface thus giving it a hairy-like appearance.</text>
</comment>
<comment type="subcellular location">
    <subcellularLocation>
        <location>Virion</location>
    </subcellularLocation>
</comment>
<comment type="PTM">
    <text evidence="3">May be hydroxylated on lysine by the viral-encoded procollagen-lysine,2-oxoglutarate 5-dioxygenase.</text>
</comment>
<organismHost>
    <name type="scientific">Acanthamoeba polyphaga</name>
    <name type="common">Amoeba</name>
    <dbReference type="NCBI Taxonomy" id="5757"/>
</organismHost>
<organism>
    <name type="scientific">Acanthamoeba polyphaga mimivirus</name>
    <name type="common">APMV</name>
    <dbReference type="NCBI Taxonomy" id="212035"/>
    <lineage>
        <taxon>Viruses</taxon>
        <taxon>Varidnaviria</taxon>
        <taxon>Bamfordvirae</taxon>
        <taxon>Nucleocytoviricota</taxon>
        <taxon>Megaviricetes</taxon>
        <taxon>Imitervirales</taxon>
        <taxon>Mimiviridae</taxon>
        <taxon>Megamimivirinae</taxon>
        <taxon>Mimivirus</taxon>
        <taxon>Mimivirus bradfordmassiliense</taxon>
    </lineage>
</organism>
<reference key="1">
    <citation type="journal article" date="2004" name="Science">
        <title>The 1.2-megabase genome sequence of Mimivirus.</title>
        <authorList>
            <person name="Raoult D."/>
            <person name="Audic S."/>
            <person name="Robert C."/>
            <person name="Abergel C."/>
            <person name="Renesto P."/>
            <person name="Ogata H."/>
            <person name="La Scola B."/>
            <person name="Susan M."/>
            <person name="Claverie J.-M."/>
        </authorList>
    </citation>
    <scope>NUCLEOTIDE SEQUENCE [LARGE SCALE GENOMIC DNA]</scope>
    <source>
        <strain>Rowbotham-Bradford</strain>
    </source>
</reference>
<protein>
    <recommendedName>
        <fullName>Collagen-like protein 5</fullName>
    </recommendedName>
</protein>
<gene>
    <name type="ordered locus">MIMI_R241</name>
</gene>
<feature type="chain" id="PRO_0000059420" description="Collagen-like protein 5">
    <location>
        <begin position="1"/>
        <end position="812"/>
    </location>
</feature>
<feature type="domain" description="Collagen-like 1">
    <location>
        <begin position="69"/>
        <end position="128"/>
    </location>
</feature>
<feature type="domain" description="Collagen-like 2">
    <location>
        <begin position="143"/>
        <end position="502"/>
    </location>
</feature>
<feature type="domain" description="Collagen-like 3">
    <location>
        <begin position="506"/>
        <end position="565"/>
    </location>
</feature>
<feature type="region of interest" description="Disordered" evidence="2">
    <location>
        <begin position="71"/>
        <end position="568"/>
    </location>
</feature>
<feature type="region of interest" description="Disordered" evidence="2">
    <location>
        <begin position="730"/>
        <end position="802"/>
    </location>
</feature>
<feature type="compositionally biased region" description="Basic and acidic residues" evidence="2">
    <location>
        <begin position="88"/>
        <end position="112"/>
    </location>
</feature>
<feature type="compositionally biased region" description="Basic and acidic residues" evidence="2">
    <location>
        <begin position="121"/>
        <end position="435"/>
    </location>
</feature>
<feature type="compositionally biased region" description="Basic and acidic residues" evidence="2">
    <location>
        <begin position="444"/>
        <end position="523"/>
    </location>
</feature>
<feature type="compositionally biased region" description="Basic and acidic residues" evidence="2">
    <location>
        <begin position="531"/>
        <end position="561"/>
    </location>
</feature>
<feature type="compositionally biased region" description="Gly residues" evidence="2">
    <location>
        <begin position="752"/>
        <end position="765"/>
    </location>
</feature>
<feature type="glycosylation site" description="N-linked (GlcNAc...) asparagine; by host" evidence="1">
    <location>
        <position position="13"/>
    </location>
</feature>
<feature type="glycosylation site" description="N-linked (GlcNAc...) asparagine; by host" evidence="1">
    <location>
        <position position="83"/>
    </location>
</feature>
<feature type="glycosylation site" description="N-linked (GlcNAc...) asparagine; by host" evidence="1">
    <location>
        <position position="502"/>
    </location>
</feature>
<feature type="glycosylation site" description="N-linked (GlcNAc...) asparagine; by host" evidence="1">
    <location>
        <position position="637"/>
    </location>
</feature>
<feature type="glycosylation site" description="N-linked (GlcNAc...) asparagine; by host" evidence="1">
    <location>
        <position position="658"/>
    </location>
</feature>
<feature type="glycosylation site" description="N-linked (GlcNAc...) asparagine; by host" evidence="1">
    <location>
        <position position="667"/>
    </location>
</feature>
<name>COLL5_MIMIV</name>
<dbReference type="EMBL" id="AY653733">
    <property type="protein sequence ID" value="AAV50514.1"/>
    <property type="molecule type" value="Genomic_DNA"/>
</dbReference>
<dbReference type="KEGG" id="vg:9924848"/>
<dbReference type="OrthoDB" id="40453at10239"/>
<dbReference type="Proteomes" id="UP000001134">
    <property type="component" value="Genome"/>
</dbReference>
<dbReference type="GO" id="GO:0005615">
    <property type="term" value="C:extracellular space"/>
    <property type="evidence" value="ECO:0007669"/>
    <property type="project" value="TreeGrafter"/>
</dbReference>
<dbReference type="GO" id="GO:0044423">
    <property type="term" value="C:virion component"/>
    <property type="evidence" value="ECO:0007669"/>
    <property type="project" value="UniProtKB-KW"/>
</dbReference>
<dbReference type="GO" id="GO:0030020">
    <property type="term" value="F:extracellular matrix structural constituent conferring tensile strength"/>
    <property type="evidence" value="ECO:0007669"/>
    <property type="project" value="TreeGrafter"/>
</dbReference>
<dbReference type="GO" id="GO:0030198">
    <property type="term" value="P:extracellular matrix organization"/>
    <property type="evidence" value="ECO:0007669"/>
    <property type="project" value="TreeGrafter"/>
</dbReference>
<dbReference type="InterPro" id="IPR008160">
    <property type="entry name" value="Collagen"/>
</dbReference>
<dbReference type="InterPro" id="IPR050149">
    <property type="entry name" value="Collagen_superfamily"/>
</dbReference>
<dbReference type="PANTHER" id="PTHR24023">
    <property type="entry name" value="COLLAGEN ALPHA"/>
    <property type="match status" value="1"/>
</dbReference>
<dbReference type="PANTHER" id="PTHR24023:SF1082">
    <property type="entry name" value="COLLAGEN TRIPLE HELIX REPEAT"/>
    <property type="match status" value="1"/>
</dbReference>
<dbReference type="Pfam" id="PF01391">
    <property type="entry name" value="Collagen"/>
    <property type="match status" value="1"/>
</dbReference>
<sequence length="812" mass="78147">MNYQYTNYCCQSNITLPNSLTCTNAKIYVDVGRPNNCLGNDGDLYLDTNTNNLYYKIDGVWTLVSNLRGASGAQGVKGDPGSNGSKGTKGEKGDKGDKGSKGDNGEKGEKGDAGLNGLDGSKGDKGDDGSKGSKGNKGDAIKGEKGDKGEIGDKGDKGEDGLKGVKGDVGDKGDKGDKGDLGLKGVKGDKGITGDKGDKGEIGEKGNKGDKGDVGVKGDDGTKGEKGEKGTKGDKGNKGDKGEDGLKGENGDIGDKGDKGSKGEDGLKGDKGDIGDKGDKGSKGEDGLKGSKGDKGEIGNKGDKGDKGDIGIKGDKGDIGDKGDKGDPGLKGEKGEKGDKGDIGDKGETGSKGSKGDKGDKGDKGDVGDKGSKGDKGDIGEKGDKGSKGDKGDKGDKGDKGDLGDKGDKGDKGETGEKGSKGDKGDKGDKGETGSKGDVGLKGSKGDKGDKGIKGDVGDKGDIGITGDKGDKGVKGDKGDIGLKGDKGDKGTKGDKGSKGDNGSKGETGAKGDKGDKGDKGIKGDTGTKGVKGDKGSKGDKGDLGDTGIKGDKGEKGDPGIKGEAGTNSPFIGTFIDNVPGSGTTIVPFGAIFAYLSAAGGGGGGGGISDGNGSPGGGAAGTVYLYPLTVTSGLVVNYTIGSGGTAGTPVAAGGAGGNTTITIGTLNFTLNGGGGGGIGGTVGAINGGAGGSVTTPLGTTPGGSGGVGNGGPLPGNGQVGLFAFSGAGGGQARTNGASTGGFPGGQTDSNTFGGGGGGASGFAKGGDGEQEIPTTIPAQSGTLGSGGGGPTDVSASGGRGGDGFVRLDYYSA</sequence>
<keyword id="KW-0176">Collagen</keyword>
<keyword id="KW-0325">Glycoprotein</keyword>
<keyword id="KW-0379">Hydroxylation</keyword>
<keyword id="KW-1185">Reference proteome</keyword>
<keyword id="KW-0677">Repeat</keyword>
<keyword id="KW-0946">Virion</keyword>